<comment type="function">
    <text evidence="1">Part of the ABC transporter complex GltIJKL involved in glutamate and aspartate uptake. Probably responsible for energy coupling to the transport system.</text>
</comment>
<comment type="catalytic activity">
    <reaction evidence="1">
        <text>a polar amino acid(out) + ATP + H2O = a polar amino acid(in) + ADP + phosphate + H(+)</text>
        <dbReference type="Rhea" id="RHEA:14673"/>
        <dbReference type="ChEBI" id="CHEBI:15377"/>
        <dbReference type="ChEBI" id="CHEBI:15378"/>
        <dbReference type="ChEBI" id="CHEBI:30616"/>
        <dbReference type="ChEBI" id="CHEBI:43474"/>
        <dbReference type="ChEBI" id="CHEBI:62031"/>
        <dbReference type="ChEBI" id="CHEBI:456216"/>
        <dbReference type="EC" id="7.4.2.1"/>
    </reaction>
    <physiologicalReaction direction="left-to-right" evidence="1">
        <dbReference type="Rhea" id="RHEA:14674"/>
    </physiologicalReaction>
</comment>
<comment type="catalytic activity">
    <reaction evidence="1">
        <text>L-glutamate(out) + ATP + H2O = L-glutamate(in) + ADP + phosphate + H(+)</text>
        <dbReference type="Rhea" id="RHEA:29035"/>
        <dbReference type="ChEBI" id="CHEBI:15377"/>
        <dbReference type="ChEBI" id="CHEBI:15378"/>
        <dbReference type="ChEBI" id="CHEBI:29985"/>
        <dbReference type="ChEBI" id="CHEBI:30616"/>
        <dbReference type="ChEBI" id="CHEBI:43474"/>
        <dbReference type="ChEBI" id="CHEBI:456216"/>
    </reaction>
    <physiologicalReaction direction="left-to-right" evidence="1">
        <dbReference type="Rhea" id="RHEA:29036"/>
    </physiologicalReaction>
</comment>
<comment type="catalytic activity">
    <reaction evidence="1">
        <text>L-aspartate(out) + ATP + H2O = L-aspartate(in) + ADP + phosphate + H(+)</text>
        <dbReference type="Rhea" id="RHEA:29039"/>
        <dbReference type="ChEBI" id="CHEBI:15377"/>
        <dbReference type="ChEBI" id="CHEBI:15378"/>
        <dbReference type="ChEBI" id="CHEBI:29991"/>
        <dbReference type="ChEBI" id="CHEBI:30616"/>
        <dbReference type="ChEBI" id="CHEBI:43474"/>
        <dbReference type="ChEBI" id="CHEBI:456216"/>
    </reaction>
    <physiologicalReaction direction="left-to-right" evidence="1">
        <dbReference type="Rhea" id="RHEA:29040"/>
    </physiologicalReaction>
</comment>
<comment type="subunit">
    <text evidence="1">The complex is composed of two ATP-binding proteins (GltL), two transmembrane proteins (GltJ and GltK) and a solute-binding protein (GltI).</text>
</comment>
<comment type="subcellular location">
    <subcellularLocation>
        <location evidence="1">Cell inner membrane</location>
        <topology evidence="1">Peripheral membrane protein</topology>
    </subcellularLocation>
</comment>
<comment type="similarity">
    <text evidence="3">Belongs to the ABC transporter superfamily.</text>
</comment>
<dbReference type="EC" id="7.4.2.1" evidence="1"/>
<dbReference type="EMBL" id="AE005174">
    <property type="protein sequence ID" value="AAG54986.1"/>
    <property type="molecule type" value="Genomic_DNA"/>
</dbReference>
<dbReference type="EMBL" id="BA000007">
    <property type="protein sequence ID" value="BAB34114.1"/>
    <property type="molecule type" value="Genomic_DNA"/>
</dbReference>
<dbReference type="PIR" id="C90715">
    <property type="entry name" value="C90715"/>
</dbReference>
<dbReference type="PIR" id="F85565">
    <property type="entry name" value="F85565"/>
</dbReference>
<dbReference type="RefSeq" id="NP_308718.1">
    <property type="nucleotide sequence ID" value="NC_002695.1"/>
</dbReference>
<dbReference type="RefSeq" id="WP_000631384.1">
    <property type="nucleotide sequence ID" value="NZ_VOAI01000012.1"/>
</dbReference>
<dbReference type="SMR" id="P0AAG4"/>
<dbReference type="STRING" id="155864.Z0802"/>
<dbReference type="GeneID" id="917052"/>
<dbReference type="GeneID" id="93776830"/>
<dbReference type="KEGG" id="ece:Z0802"/>
<dbReference type="KEGG" id="ecs:ECs_0691"/>
<dbReference type="PATRIC" id="fig|386585.9.peg.805"/>
<dbReference type="eggNOG" id="COG1126">
    <property type="taxonomic scope" value="Bacteria"/>
</dbReference>
<dbReference type="HOGENOM" id="CLU_000604_1_22_6"/>
<dbReference type="OMA" id="IFMDKGS"/>
<dbReference type="Proteomes" id="UP000000558">
    <property type="component" value="Chromosome"/>
</dbReference>
<dbReference type="Proteomes" id="UP000002519">
    <property type="component" value="Chromosome"/>
</dbReference>
<dbReference type="GO" id="GO:0005886">
    <property type="term" value="C:plasma membrane"/>
    <property type="evidence" value="ECO:0007669"/>
    <property type="project" value="UniProtKB-SubCell"/>
</dbReference>
<dbReference type="GO" id="GO:0005524">
    <property type="term" value="F:ATP binding"/>
    <property type="evidence" value="ECO:0007669"/>
    <property type="project" value="UniProtKB-KW"/>
</dbReference>
<dbReference type="GO" id="GO:0016887">
    <property type="term" value="F:ATP hydrolysis activity"/>
    <property type="evidence" value="ECO:0007669"/>
    <property type="project" value="InterPro"/>
</dbReference>
<dbReference type="GO" id="GO:0102013">
    <property type="term" value="F:ATPase-coupled L-glutamate tranmembrane transporter activity"/>
    <property type="evidence" value="ECO:0007669"/>
    <property type="project" value="RHEA"/>
</dbReference>
<dbReference type="CDD" id="cd03262">
    <property type="entry name" value="ABC_HisP_GlnQ"/>
    <property type="match status" value="1"/>
</dbReference>
<dbReference type="FunFam" id="3.40.50.300:FF:000020">
    <property type="entry name" value="Amino acid ABC transporter ATP-binding component"/>
    <property type="match status" value="1"/>
</dbReference>
<dbReference type="Gene3D" id="3.40.50.300">
    <property type="entry name" value="P-loop containing nucleotide triphosphate hydrolases"/>
    <property type="match status" value="1"/>
</dbReference>
<dbReference type="InterPro" id="IPR003593">
    <property type="entry name" value="AAA+_ATPase"/>
</dbReference>
<dbReference type="InterPro" id="IPR030679">
    <property type="entry name" value="ABC_ATPase_HisP-typ"/>
</dbReference>
<dbReference type="InterPro" id="IPR003439">
    <property type="entry name" value="ABC_transporter-like_ATP-bd"/>
</dbReference>
<dbReference type="InterPro" id="IPR017871">
    <property type="entry name" value="ABC_transporter-like_CS"/>
</dbReference>
<dbReference type="InterPro" id="IPR050086">
    <property type="entry name" value="MetN_ABC_transporter-like"/>
</dbReference>
<dbReference type="InterPro" id="IPR027417">
    <property type="entry name" value="P-loop_NTPase"/>
</dbReference>
<dbReference type="PANTHER" id="PTHR43166">
    <property type="entry name" value="AMINO ACID IMPORT ATP-BINDING PROTEIN"/>
    <property type="match status" value="1"/>
</dbReference>
<dbReference type="PANTHER" id="PTHR43166:SF9">
    <property type="entry name" value="GLUTAMATE_ASPARTATE IMPORT ATP-BINDING PROTEIN GLTL"/>
    <property type="match status" value="1"/>
</dbReference>
<dbReference type="Pfam" id="PF00005">
    <property type="entry name" value="ABC_tran"/>
    <property type="match status" value="1"/>
</dbReference>
<dbReference type="PIRSF" id="PIRSF039085">
    <property type="entry name" value="ABC_ATPase_HisP"/>
    <property type="match status" value="1"/>
</dbReference>
<dbReference type="SMART" id="SM00382">
    <property type="entry name" value="AAA"/>
    <property type="match status" value="1"/>
</dbReference>
<dbReference type="SUPFAM" id="SSF52540">
    <property type="entry name" value="P-loop containing nucleoside triphosphate hydrolases"/>
    <property type="match status" value="1"/>
</dbReference>
<dbReference type="PROSITE" id="PS00211">
    <property type="entry name" value="ABC_TRANSPORTER_1"/>
    <property type="match status" value="1"/>
</dbReference>
<dbReference type="PROSITE" id="PS50893">
    <property type="entry name" value="ABC_TRANSPORTER_2"/>
    <property type="match status" value="1"/>
</dbReference>
<reference key="1">
    <citation type="journal article" date="2001" name="Nature">
        <title>Genome sequence of enterohaemorrhagic Escherichia coli O157:H7.</title>
        <authorList>
            <person name="Perna N.T."/>
            <person name="Plunkett G. III"/>
            <person name="Burland V."/>
            <person name="Mau B."/>
            <person name="Glasner J.D."/>
            <person name="Rose D.J."/>
            <person name="Mayhew G.F."/>
            <person name="Evans P.S."/>
            <person name="Gregor J."/>
            <person name="Kirkpatrick H.A."/>
            <person name="Posfai G."/>
            <person name="Hackett J."/>
            <person name="Klink S."/>
            <person name="Boutin A."/>
            <person name="Shao Y."/>
            <person name="Miller L."/>
            <person name="Grotbeck E.J."/>
            <person name="Davis N.W."/>
            <person name="Lim A."/>
            <person name="Dimalanta E.T."/>
            <person name="Potamousis K."/>
            <person name="Apodaca J."/>
            <person name="Anantharaman T.S."/>
            <person name="Lin J."/>
            <person name="Yen G."/>
            <person name="Schwartz D.C."/>
            <person name="Welch R.A."/>
            <person name="Blattner F.R."/>
        </authorList>
    </citation>
    <scope>NUCLEOTIDE SEQUENCE [LARGE SCALE GENOMIC DNA]</scope>
    <source>
        <strain>O157:H7 / EDL933 / ATCC 700927 / EHEC</strain>
    </source>
</reference>
<reference key="2">
    <citation type="journal article" date="2001" name="DNA Res.">
        <title>Complete genome sequence of enterohemorrhagic Escherichia coli O157:H7 and genomic comparison with a laboratory strain K-12.</title>
        <authorList>
            <person name="Hayashi T."/>
            <person name="Makino K."/>
            <person name="Ohnishi M."/>
            <person name="Kurokawa K."/>
            <person name="Ishii K."/>
            <person name="Yokoyama K."/>
            <person name="Han C.-G."/>
            <person name="Ohtsubo E."/>
            <person name="Nakayama K."/>
            <person name="Murata T."/>
            <person name="Tanaka M."/>
            <person name="Tobe T."/>
            <person name="Iida T."/>
            <person name="Takami H."/>
            <person name="Honda T."/>
            <person name="Sasakawa C."/>
            <person name="Ogasawara N."/>
            <person name="Yasunaga T."/>
            <person name="Kuhara S."/>
            <person name="Shiba T."/>
            <person name="Hattori M."/>
            <person name="Shinagawa H."/>
        </authorList>
    </citation>
    <scope>NUCLEOTIDE SEQUENCE [LARGE SCALE GENOMIC DNA]</scope>
    <source>
        <strain>O157:H7 / Sakai / RIMD 0509952 / EHEC</strain>
    </source>
</reference>
<sequence>MITLKNVSKWYGHFQVLTDCSTEVKKGEVVVVCGPSGSGKSTLIKTVNGLEPVQQGEITVDGIVVNDKKTDLAKLRSRVGMVFQHFELFPHLSIIENLTLAQVKVLKRDKAPAREKALKLLERVGLSAHANKFPAQLSGGQQQRVAIARALCMDPIAMLFDEPTSALDPEMINEVLDVMVELANEGMTMMVVTHEMGFARKVANRVIFMDEGKIVEDSPKDAFFDDPKSDRAKDFLAKILH</sequence>
<keyword id="KW-0029">Amino-acid transport</keyword>
<keyword id="KW-0067">ATP-binding</keyword>
<keyword id="KW-0997">Cell inner membrane</keyword>
<keyword id="KW-1003">Cell membrane</keyword>
<keyword id="KW-0472">Membrane</keyword>
<keyword id="KW-0547">Nucleotide-binding</keyword>
<keyword id="KW-1185">Reference proteome</keyword>
<keyword id="KW-1278">Translocase</keyword>
<keyword id="KW-0813">Transport</keyword>
<evidence type="ECO:0000250" key="1">
    <source>
        <dbReference type="UniProtKB" id="P0AAG3"/>
    </source>
</evidence>
<evidence type="ECO:0000255" key="2">
    <source>
        <dbReference type="PROSITE-ProRule" id="PRU00434"/>
    </source>
</evidence>
<evidence type="ECO:0000305" key="3"/>
<gene>
    <name type="primary">gltL</name>
    <name type="ordered locus">Z0802</name>
    <name type="ordered locus">ECs0691</name>
</gene>
<name>GLTL_ECO57</name>
<proteinExistence type="inferred from homology"/>
<accession>P0AAG4</accession>
<accession>P41076</accession>
<organism>
    <name type="scientific">Escherichia coli O157:H7</name>
    <dbReference type="NCBI Taxonomy" id="83334"/>
    <lineage>
        <taxon>Bacteria</taxon>
        <taxon>Pseudomonadati</taxon>
        <taxon>Pseudomonadota</taxon>
        <taxon>Gammaproteobacteria</taxon>
        <taxon>Enterobacterales</taxon>
        <taxon>Enterobacteriaceae</taxon>
        <taxon>Escherichia</taxon>
    </lineage>
</organism>
<protein>
    <recommendedName>
        <fullName evidence="1">Glutamate/aspartate import ATP-binding protein GltL</fullName>
        <ecNumber evidence="1">7.4.2.1</ecNumber>
    </recommendedName>
</protein>
<feature type="chain" id="PRO_0000092336" description="Glutamate/aspartate import ATP-binding protein GltL">
    <location>
        <begin position="1"/>
        <end position="241"/>
    </location>
</feature>
<feature type="domain" description="ABC transporter" evidence="2">
    <location>
        <begin position="2"/>
        <end position="236"/>
    </location>
</feature>
<feature type="binding site" evidence="2">
    <location>
        <begin position="34"/>
        <end position="41"/>
    </location>
    <ligand>
        <name>ATP</name>
        <dbReference type="ChEBI" id="CHEBI:30616"/>
    </ligand>
</feature>